<protein>
    <recommendedName>
        <fullName evidence="1">Elongation factor 4</fullName>
        <shortName evidence="1">EF-4</shortName>
        <ecNumber evidence="1">3.6.5.n1</ecNumber>
    </recommendedName>
    <alternativeName>
        <fullName evidence="1">Ribosomal back-translocase LepA</fullName>
    </alternativeName>
</protein>
<proteinExistence type="inferred from homology"/>
<comment type="function">
    <text evidence="1">Required for accurate and efficient protein synthesis under certain stress conditions. May act as a fidelity factor of the translation reaction, by catalyzing a one-codon backward translocation of tRNAs on improperly translocated ribosomes. Back-translocation proceeds from a post-translocation (POST) complex to a pre-translocation (PRE) complex, thus giving elongation factor G a second chance to translocate the tRNAs correctly. Binds to ribosomes in a GTP-dependent manner.</text>
</comment>
<comment type="catalytic activity">
    <reaction evidence="1">
        <text>GTP + H2O = GDP + phosphate + H(+)</text>
        <dbReference type="Rhea" id="RHEA:19669"/>
        <dbReference type="ChEBI" id="CHEBI:15377"/>
        <dbReference type="ChEBI" id="CHEBI:15378"/>
        <dbReference type="ChEBI" id="CHEBI:37565"/>
        <dbReference type="ChEBI" id="CHEBI:43474"/>
        <dbReference type="ChEBI" id="CHEBI:58189"/>
        <dbReference type="EC" id="3.6.5.n1"/>
    </reaction>
</comment>
<comment type="subcellular location">
    <subcellularLocation>
        <location evidence="1">Cell inner membrane</location>
        <topology evidence="1">Peripheral membrane protein</topology>
        <orientation evidence="1">Cytoplasmic side</orientation>
    </subcellularLocation>
</comment>
<comment type="similarity">
    <text evidence="1">Belongs to the TRAFAC class translation factor GTPase superfamily. Classic translation factor GTPase family. LepA subfamily.</text>
</comment>
<feature type="chain" id="PRO_0000224791" description="Elongation factor 4">
    <location>
        <begin position="1"/>
        <end position="600"/>
    </location>
</feature>
<feature type="domain" description="tr-type G">
    <location>
        <begin position="5"/>
        <end position="187"/>
    </location>
</feature>
<feature type="binding site" evidence="1">
    <location>
        <begin position="17"/>
        <end position="22"/>
    </location>
    <ligand>
        <name>GTP</name>
        <dbReference type="ChEBI" id="CHEBI:37565"/>
    </ligand>
</feature>
<feature type="binding site" evidence="1">
    <location>
        <begin position="134"/>
        <end position="137"/>
    </location>
    <ligand>
        <name>GTP</name>
        <dbReference type="ChEBI" id="CHEBI:37565"/>
    </ligand>
</feature>
<keyword id="KW-0997">Cell inner membrane</keyword>
<keyword id="KW-1003">Cell membrane</keyword>
<keyword id="KW-0342">GTP-binding</keyword>
<keyword id="KW-0378">Hydrolase</keyword>
<keyword id="KW-0472">Membrane</keyword>
<keyword id="KW-0547">Nucleotide-binding</keyword>
<keyword id="KW-0648">Protein biosynthesis</keyword>
<dbReference type="EC" id="3.6.5.n1" evidence="1"/>
<dbReference type="EMBL" id="CP000053">
    <property type="protein sequence ID" value="AAY61851.1"/>
    <property type="molecule type" value="Genomic_DNA"/>
</dbReference>
<dbReference type="SMR" id="Q4UKS2"/>
<dbReference type="STRING" id="315456.RF_1000"/>
<dbReference type="KEGG" id="rfe:RF_1000"/>
<dbReference type="eggNOG" id="COG0481">
    <property type="taxonomic scope" value="Bacteria"/>
</dbReference>
<dbReference type="HOGENOM" id="CLU_009995_3_3_5"/>
<dbReference type="OrthoDB" id="9802948at2"/>
<dbReference type="Proteomes" id="UP000008548">
    <property type="component" value="Chromosome"/>
</dbReference>
<dbReference type="GO" id="GO:0005886">
    <property type="term" value="C:plasma membrane"/>
    <property type="evidence" value="ECO:0007669"/>
    <property type="project" value="UniProtKB-SubCell"/>
</dbReference>
<dbReference type="GO" id="GO:0005525">
    <property type="term" value="F:GTP binding"/>
    <property type="evidence" value="ECO:0007669"/>
    <property type="project" value="UniProtKB-UniRule"/>
</dbReference>
<dbReference type="GO" id="GO:0003924">
    <property type="term" value="F:GTPase activity"/>
    <property type="evidence" value="ECO:0007669"/>
    <property type="project" value="UniProtKB-UniRule"/>
</dbReference>
<dbReference type="GO" id="GO:0097216">
    <property type="term" value="F:guanosine tetraphosphate binding"/>
    <property type="evidence" value="ECO:0007669"/>
    <property type="project" value="UniProtKB-ARBA"/>
</dbReference>
<dbReference type="GO" id="GO:0043022">
    <property type="term" value="F:ribosome binding"/>
    <property type="evidence" value="ECO:0007669"/>
    <property type="project" value="UniProtKB-UniRule"/>
</dbReference>
<dbReference type="GO" id="GO:0003746">
    <property type="term" value="F:translation elongation factor activity"/>
    <property type="evidence" value="ECO:0007669"/>
    <property type="project" value="UniProtKB-UniRule"/>
</dbReference>
<dbReference type="GO" id="GO:0045727">
    <property type="term" value="P:positive regulation of translation"/>
    <property type="evidence" value="ECO:0007669"/>
    <property type="project" value="UniProtKB-UniRule"/>
</dbReference>
<dbReference type="CDD" id="cd03699">
    <property type="entry name" value="EF4_II"/>
    <property type="match status" value="1"/>
</dbReference>
<dbReference type="CDD" id="cd16260">
    <property type="entry name" value="EF4_III"/>
    <property type="match status" value="1"/>
</dbReference>
<dbReference type="CDD" id="cd01890">
    <property type="entry name" value="LepA"/>
    <property type="match status" value="1"/>
</dbReference>
<dbReference type="CDD" id="cd03709">
    <property type="entry name" value="lepA_C"/>
    <property type="match status" value="1"/>
</dbReference>
<dbReference type="FunFam" id="3.40.50.300:FF:000078">
    <property type="entry name" value="Elongation factor 4"/>
    <property type="match status" value="1"/>
</dbReference>
<dbReference type="FunFam" id="2.40.30.10:FF:000015">
    <property type="entry name" value="Translation factor GUF1, mitochondrial"/>
    <property type="match status" value="1"/>
</dbReference>
<dbReference type="FunFam" id="3.30.70.240:FF:000007">
    <property type="entry name" value="Translation factor GUF1, mitochondrial"/>
    <property type="match status" value="1"/>
</dbReference>
<dbReference type="FunFam" id="3.30.70.2570:FF:000001">
    <property type="entry name" value="Translation factor GUF1, mitochondrial"/>
    <property type="match status" value="1"/>
</dbReference>
<dbReference type="FunFam" id="3.30.70.870:FF:000004">
    <property type="entry name" value="Translation factor GUF1, mitochondrial"/>
    <property type="match status" value="1"/>
</dbReference>
<dbReference type="Gene3D" id="3.30.70.240">
    <property type="match status" value="1"/>
</dbReference>
<dbReference type="Gene3D" id="3.30.70.2570">
    <property type="entry name" value="Elongation factor 4, C-terminal domain"/>
    <property type="match status" value="1"/>
</dbReference>
<dbReference type="Gene3D" id="3.30.70.870">
    <property type="entry name" value="Elongation Factor G (Translational Gtpase), domain 3"/>
    <property type="match status" value="1"/>
</dbReference>
<dbReference type="Gene3D" id="3.40.50.300">
    <property type="entry name" value="P-loop containing nucleotide triphosphate hydrolases"/>
    <property type="match status" value="1"/>
</dbReference>
<dbReference type="Gene3D" id="2.40.30.10">
    <property type="entry name" value="Translation factors"/>
    <property type="match status" value="1"/>
</dbReference>
<dbReference type="HAMAP" id="MF_00071">
    <property type="entry name" value="LepA"/>
    <property type="match status" value="1"/>
</dbReference>
<dbReference type="InterPro" id="IPR006297">
    <property type="entry name" value="EF-4"/>
</dbReference>
<dbReference type="InterPro" id="IPR035647">
    <property type="entry name" value="EFG_III/V"/>
</dbReference>
<dbReference type="InterPro" id="IPR000640">
    <property type="entry name" value="EFG_V-like"/>
</dbReference>
<dbReference type="InterPro" id="IPR004161">
    <property type="entry name" value="EFTu-like_2"/>
</dbReference>
<dbReference type="InterPro" id="IPR031157">
    <property type="entry name" value="G_TR_CS"/>
</dbReference>
<dbReference type="InterPro" id="IPR038363">
    <property type="entry name" value="LepA_C_sf"/>
</dbReference>
<dbReference type="InterPro" id="IPR013842">
    <property type="entry name" value="LepA_CTD"/>
</dbReference>
<dbReference type="InterPro" id="IPR035654">
    <property type="entry name" value="LepA_IV"/>
</dbReference>
<dbReference type="InterPro" id="IPR027417">
    <property type="entry name" value="P-loop_NTPase"/>
</dbReference>
<dbReference type="InterPro" id="IPR005225">
    <property type="entry name" value="Small_GTP-bd"/>
</dbReference>
<dbReference type="InterPro" id="IPR000795">
    <property type="entry name" value="T_Tr_GTP-bd_dom"/>
</dbReference>
<dbReference type="NCBIfam" id="TIGR01393">
    <property type="entry name" value="lepA"/>
    <property type="match status" value="1"/>
</dbReference>
<dbReference type="NCBIfam" id="TIGR00231">
    <property type="entry name" value="small_GTP"/>
    <property type="match status" value="1"/>
</dbReference>
<dbReference type="PANTHER" id="PTHR43512:SF4">
    <property type="entry name" value="TRANSLATION FACTOR GUF1 HOMOLOG, CHLOROPLASTIC"/>
    <property type="match status" value="1"/>
</dbReference>
<dbReference type="PANTHER" id="PTHR43512">
    <property type="entry name" value="TRANSLATION FACTOR GUF1-RELATED"/>
    <property type="match status" value="1"/>
</dbReference>
<dbReference type="Pfam" id="PF00679">
    <property type="entry name" value="EFG_C"/>
    <property type="match status" value="1"/>
</dbReference>
<dbReference type="Pfam" id="PF00009">
    <property type="entry name" value="GTP_EFTU"/>
    <property type="match status" value="1"/>
</dbReference>
<dbReference type="Pfam" id="PF03144">
    <property type="entry name" value="GTP_EFTU_D2"/>
    <property type="match status" value="1"/>
</dbReference>
<dbReference type="Pfam" id="PF06421">
    <property type="entry name" value="LepA_C"/>
    <property type="match status" value="1"/>
</dbReference>
<dbReference type="PRINTS" id="PR00315">
    <property type="entry name" value="ELONGATNFCT"/>
</dbReference>
<dbReference type="SMART" id="SM00838">
    <property type="entry name" value="EFG_C"/>
    <property type="match status" value="1"/>
</dbReference>
<dbReference type="SUPFAM" id="SSF54980">
    <property type="entry name" value="EF-G C-terminal domain-like"/>
    <property type="match status" value="2"/>
</dbReference>
<dbReference type="SUPFAM" id="SSF52540">
    <property type="entry name" value="P-loop containing nucleoside triphosphate hydrolases"/>
    <property type="match status" value="1"/>
</dbReference>
<dbReference type="PROSITE" id="PS00301">
    <property type="entry name" value="G_TR_1"/>
    <property type="match status" value="1"/>
</dbReference>
<dbReference type="PROSITE" id="PS51722">
    <property type="entry name" value="G_TR_2"/>
    <property type="match status" value="1"/>
</dbReference>
<name>LEPA_RICFE</name>
<sequence length="600" mass="67089">MNNQKYIRNFSIIAHIDHGKSTLADRLIEHCGGLQAREMSQQVLDSMDIEKERGITIKAQTVRLVYKAKDGNTYYLNLMDTPGHVDFAYEVSRSLAACEGSLLVVDSTQGVEAQTLANVYQAIENDHEIVPVLNKIDLPASEPEQVKQQIKDIIGIDASEAVLISAKSGIGIDLVLEAIVNKLPPPKESSSDILKALLVDSWYDPYLGVVILVRIIDGTLRKNIRIKMMATNSVYTVENVGYFTPKKHISDVLHAGEIGFFTASIKQVADCKVGDTITDEKKPCEQALPGFKPNLPVVFCGLYPTDSAEFEHLKDSLAKLRLNDASFEYEMESSSALGVGFRCGFLGLLHLEIIQERLSREFDLDLITTAPSVVYKIHMRDGESLEIHNPADLSDLQKIESMEEPWIKATIMVPDEFLGAVLSLCTEKRGVQLDHSYIANRAKIIYKLPLNEIVYDFYDRLKSCSKGYASFEWQMDVYEPSELVKLGILVNGEEVDALSTIVHRSRAEQRGRALCVRLKDLIPRQQIDIAIQASIGSRIIARETIKALRKDVLSKCYGGDISRKRKLLEKQKAGKKRMRQYGNIEIPQSAFIAALKIGDE</sequence>
<gene>
    <name evidence="1" type="primary">lepA</name>
    <name type="ordered locus">RF_1000</name>
</gene>
<accession>Q4UKS2</accession>
<reference key="1">
    <citation type="journal article" date="2005" name="PLoS Biol.">
        <title>The genome sequence of Rickettsia felis identifies the first putative conjugative plasmid in an obligate intracellular parasite.</title>
        <authorList>
            <person name="Ogata H."/>
            <person name="Renesto P."/>
            <person name="Audic S."/>
            <person name="Robert C."/>
            <person name="Blanc G."/>
            <person name="Fournier P.-E."/>
            <person name="Parinello H."/>
            <person name="Claverie J.-M."/>
            <person name="Raoult D."/>
        </authorList>
    </citation>
    <scope>NUCLEOTIDE SEQUENCE [LARGE SCALE GENOMIC DNA]</scope>
    <source>
        <strain>ATCC VR-1525 / URRWXCal2</strain>
    </source>
</reference>
<evidence type="ECO:0000255" key="1">
    <source>
        <dbReference type="HAMAP-Rule" id="MF_00071"/>
    </source>
</evidence>
<organism>
    <name type="scientific">Rickettsia felis (strain ATCC VR-1525 / URRWXCal2)</name>
    <name type="common">Rickettsia azadi</name>
    <dbReference type="NCBI Taxonomy" id="315456"/>
    <lineage>
        <taxon>Bacteria</taxon>
        <taxon>Pseudomonadati</taxon>
        <taxon>Pseudomonadota</taxon>
        <taxon>Alphaproteobacteria</taxon>
        <taxon>Rickettsiales</taxon>
        <taxon>Rickettsiaceae</taxon>
        <taxon>Rickettsieae</taxon>
        <taxon>Rickettsia</taxon>
        <taxon>spotted fever group</taxon>
    </lineage>
</organism>